<comment type="function">
    <text evidence="3">Binds to photoactivated, phosphorylated RHO and terminates RHO signaling via G-proteins by competing with G-proteins for the same binding site on RHO. May play a role in preventing light-dependent degeneration of retinal photoreceptor cells.</text>
</comment>
<comment type="subunit">
    <text evidence="2">Monomer. Homodimer. Homotetramer. Interacts with RHO (via the phosphorylated C-terminus).</text>
</comment>
<comment type="subcellular location">
    <subcellularLocation>
        <location evidence="3">Cell projection</location>
        <location evidence="3">Cilium</location>
        <location evidence="3">Photoreceptor outer segment</location>
    </subcellularLocation>
    <subcellularLocation>
        <location evidence="3">Membrane</location>
        <topology evidence="3">Peripheral membrane protein</topology>
    </subcellularLocation>
    <text evidence="1 2">Highly expressed in photoreceptor outer segments in light-exposed retina. Evenly distributed throughout rod photoreceptor cells in dark-adapted retina (By similarity). Predominantly dectected at the proximal region of photoreceptor outer segments, near disk membranes.</text>
</comment>
<comment type="tissue specificity">
    <text evidence="5">Retina and pineal gland.</text>
</comment>
<comment type="domain">
    <text evidence="1">The C-terminus interferes with binding to non-phosphorylated RHO. Interaction with phosphorylated RHO triggers displacement of the C-terminus and leads to a conformation change that mediates high-affinity RHO binding.</text>
</comment>
<comment type="similarity">
    <text evidence="6">Belongs to the arrestin family.</text>
</comment>
<sequence length="403" mass="44950">MAACVKTNKSHVIFKKVSRDKSVTIYLGKRDYIDHVSQVEPVDGVVLVDPELVKGKKVYVTLTCAFRYGQEDIDVIGLTFRRDLYFSRVQVYPPVGAMSAPTQLQLSLLKKLGDNTYPFLLTFPDYLPCSVMLQPAPQDVGKSCGVDFEVKAFATDITDAEEDKIPKKSSVRLLIRKVQHAPPEMGPQPCAEASWQFFMSDKPLHLSVSLSKEIYFHGEPIPVTVTVTNNTEKVVKKIKVSVEQIANVVLYSSDYYVKPVASEETQEKVQPNSTLTKTLVLVPLLANNRERRGIALDGKIKHEDTNLASSTIIKEGIDRTVMGILVSYHIKVKLTVSGFLGELTSSEVATEVPFRLMHPQPEDPAKESVQDENLVFEEFARQNLKDTGENTEGKKDEDAGQDE</sequence>
<proteinExistence type="evidence at protein level"/>
<keyword id="KW-0966">Cell projection</keyword>
<keyword id="KW-0472">Membrane</keyword>
<keyword id="KW-0597">Phosphoprotein</keyword>
<keyword id="KW-1185">Reference proteome</keyword>
<name>ARRS_RAT</name>
<evidence type="ECO:0000250" key="1">
    <source>
        <dbReference type="UniProtKB" id="P08168"/>
    </source>
</evidence>
<evidence type="ECO:0000250" key="2">
    <source>
        <dbReference type="UniProtKB" id="P10523"/>
    </source>
</evidence>
<evidence type="ECO:0000250" key="3">
    <source>
        <dbReference type="UniProtKB" id="P20443"/>
    </source>
</evidence>
<evidence type="ECO:0000256" key="4">
    <source>
        <dbReference type="SAM" id="MobiDB-lite"/>
    </source>
</evidence>
<evidence type="ECO:0000269" key="5">
    <source>
    </source>
</evidence>
<evidence type="ECO:0000305" key="6"/>
<evidence type="ECO:0007744" key="7">
    <source>
    </source>
</evidence>
<gene>
    <name type="primary">Sag</name>
</gene>
<organism>
    <name type="scientific">Rattus norvegicus</name>
    <name type="common">Rat</name>
    <dbReference type="NCBI Taxonomy" id="10116"/>
    <lineage>
        <taxon>Eukaryota</taxon>
        <taxon>Metazoa</taxon>
        <taxon>Chordata</taxon>
        <taxon>Craniata</taxon>
        <taxon>Vertebrata</taxon>
        <taxon>Euteleostomi</taxon>
        <taxon>Mammalia</taxon>
        <taxon>Eutheria</taxon>
        <taxon>Euarchontoglires</taxon>
        <taxon>Glires</taxon>
        <taxon>Rodentia</taxon>
        <taxon>Myomorpha</taxon>
        <taxon>Muroidea</taxon>
        <taxon>Muridae</taxon>
        <taxon>Murinae</taxon>
        <taxon>Rattus</taxon>
    </lineage>
</organism>
<accession>P15887</accession>
<feature type="chain" id="PRO_0000205189" description="S-arrestin">
    <location>
        <begin position="1"/>
        <end position="403"/>
    </location>
</feature>
<feature type="region of interest" description="Disordered" evidence="4">
    <location>
        <begin position="381"/>
        <end position="403"/>
    </location>
</feature>
<feature type="modified residue" description="Phosphothreonine" evidence="7">
    <location>
        <position position="231"/>
    </location>
</feature>
<feature type="sequence conflict" description="In Ref. 3; CAA33412/AAA42107." evidence="6" ref="3">
    <original>L</original>
    <variation>R</variation>
    <location>
        <position position="109"/>
    </location>
</feature>
<feature type="sequence conflict" description="In Ref. 3; AAA42107." evidence="6" ref="3">
    <original>T</original>
    <variation>R</variation>
    <location>
        <position position="158"/>
    </location>
</feature>
<reference key="1">
    <citation type="journal article" date="1989" name="FEBS Lett.">
        <title>Rat pineal S-antigen: sequence analysis reveals presence of alpha-transducin homologous sequence.</title>
        <authorList>
            <person name="Abe T."/>
            <person name="Yamaki K."/>
            <person name="Tsuda M."/>
            <person name="Singh V.K."/>
            <person name="Suzuki S."/>
            <person name="McKinnon R."/>
            <person name="Klein D.C."/>
            <person name="Donoso L.A."/>
            <person name="Shinohara T."/>
        </authorList>
    </citation>
    <scope>NUCLEOTIDE SEQUENCE [MRNA]</scope>
    <source>
        <strain>Sprague-Dawley</strain>
        <tissue>Pineal gland</tissue>
    </source>
</reference>
<reference key="2">
    <citation type="journal article" date="1990" name="Exp. Eye Res.">
        <title>S-antigen from the rat retina and pineal gland have identical sequences.</title>
        <authorList>
            <person name="Abe T."/>
            <person name="Shinohara T."/>
        </authorList>
    </citation>
    <scope>NUCLEOTIDE SEQUENCE [MRNA]</scope>
    <source>
        <tissue>Retina</tissue>
    </source>
</reference>
<reference key="3">
    <citation type="journal article" date="1990" name="J. Neurochem.">
        <title>Differential expression of mRNA and protein encoding retinal and pineal S-antigen during the light/dark cycle.</title>
        <authorList>
            <person name="Craft C.M."/>
            <person name="Whitmore D.H."/>
            <person name="Donoso L.A."/>
        </authorList>
    </citation>
    <scope>NUCLEOTIDE SEQUENCE [MRNA]</scope>
    <scope>TISSUE SPECIFICITY</scope>
    <source>
        <strain>Sprague-Dawley</strain>
        <tissue>Pineal gland</tissue>
    </source>
</reference>
<reference key="4">
    <citation type="journal article" date="2006" name="Proc. Natl. Acad. Sci. U.S.A.">
        <title>Quantitative phosphoproteomics of vasopressin-sensitive renal cells: regulation of aquaporin-2 phosphorylation at two sites.</title>
        <authorList>
            <person name="Hoffert J.D."/>
            <person name="Pisitkun T."/>
            <person name="Wang G."/>
            <person name="Shen R.-F."/>
            <person name="Knepper M.A."/>
        </authorList>
    </citation>
    <scope>PHOSPHORYLATION [LARGE SCALE ANALYSIS] AT THR-231</scope>
    <scope>IDENTIFICATION BY MASS SPECTROMETRY [LARGE SCALE ANALYSIS]</scope>
</reference>
<dbReference type="EMBL" id="X51781">
    <property type="protein sequence ID" value="CAA36076.1"/>
    <property type="molecule type" value="mRNA"/>
</dbReference>
<dbReference type="EMBL" id="X15353">
    <property type="protein sequence ID" value="CAA33412.1"/>
    <property type="molecule type" value="mRNA"/>
</dbReference>
<dbReference type="EMBL" id="M60737">
    <property type="protein sequence ID" value="AAA42107.1"/>
    <property type="molecule type" value="mRNA"/>
</dbReference>
<dbReference type="PIR" id="S03960">
    <property type="entry name" value="S03960"/>
</dbReference>
<dbReference type="RefSeq" id="NP_037155.2">
    <property type="nucleotide sequence ID" value="NM_013023.3"/>
</dbReference>
<dbReference type="RefSeq" id="XP_008765418.1">
    <property type="nucleotide sequence ID" value="XM_008767196.2"/>
</dbReference>
<dbReference type="RefSeq" id="XP_038938997.1">
    <property type="nucleotide sequence ID" value="XM_039083069.2"/>
</dbReference>
<dbReference type="SMR" id="P15887"/>
<dbReference type="FunCoup" id="P15887">
    <property type="interactions" value="75"/>
</dbReference>
<dbReference type="STRING" id="10116.ENSRNOP00000024733"/>
<dbReference type="iPTMnet" id="P15887"/>
<dbReference type="PhosphoSitePlus" id="P15887"/>
<dbReference type="jPOST" id="P15887"/>
<dbReference type="PaxDb" id="10116-ENSRNOP00000024733"/>
<dbReference type="DNASU" id="25539"/>
<dbReference type="Ensembl" id="ENSRNOT00000085770.2">
    <property type="protein sequence ID" value="ENSRNOP00000071579.1"/>
    <property type="gene ID" value="ENSRNOG00000018185.7"/>
</dbReference>
<dbReference type="GeneID" id="25539"/>
<dbReference type="KEGG" id="rno:25539"/>
<dbReference type="UCSC" id="RGD:3619">
    <property type="organism name" value="rat"/>
</dbReference>
<dbReference type="AGR" id="RGD:3619"/>
<dbReference type="CTD" id="6295"/>
<dbReference type="RGD" id="3619">
    <property type="gene designation" value="Sag"/>
</dbReference>
<dbReference type="eggNOG" id="KOG3865">
    <property type="taxonomic scope" value="Eukaryota"/>
</dbReference>
<dbReference type="GeneTree" id="ENSGT00950000182887"/>
<dbReference type="InParanoid" id="P15887"/>
<dbReference type="OMA" id="QPAPQDM"/>
<dbReference type="PhylomeDB" id="P15887"/>
<dbReference type="TreeFam" id="TF314260"/>
<dbReference type="Reactome" id="R-RNO-2514859">
    <property type="pathway name" value="Inactivation, recovery and regulation of the phototransduction cascade"/>
</dbReference>
<dbReference type="PRO" id="PR:P15887"/>
<dbReference type="Proteomes" id="UP000002494">
    <property type="component" value="Chromosome 9"/>
</dbReference>
<dbReference type="Bgee" id="ENSRNOG00000018185">
    <property type="expression patterns" value="Expressed in pancreas and 8 other cell types or tissues"/>
</dbReference>
<dbReference type="ExpressionAtlas" id="P15887">
    <property type="expression patterns" value="baseline and differential"/>
</dbReference>
<dbReference type="GO" id="GO:0016020">
    <property type="term" value="C:membrane"/>
    <property type="evidence" value="ECO:0007669"/>
    <property type="project" value="UniProtKB-SubCell"/>
</dbReference>
<dbReference type="GO" id="GO:0001917">
    <property type="term" value="C:photoreceptor inner segment"/>
    <property type="evidence" value="ECO:0000314"/>
    <property type="project" value="RGD"/>
</dbReference>
<dbReference type="GO" id="GO:0001750">
    <property type="term" value="C:photoreceptor outer segment"/>
    <property type="evidence" value="ECO:0000314"/>
    <property type="project" value="RGD"/>
</dbReference>
<dbReference type="GO" id="GO:0001664">
    <property type="term" value="F:G protein-coupled receptor binding"/>
    <property type="evidence" value="ECO:0000318"/>
    <property type="project" value="GO_Central"/>
</dbReference>
<dbReference type="GO" id="GO:0002046">
    <property type="term" value="F:opsin binding"/>
    <property type="evidence" value="ECO:0000266"/>
    <property type="project" value="RGD"/>
</dbReference>
<dbReference type="GO" id="GO:0051219">
    <property type="term" value="F:phosphoprotein binding"/>
    <property type="evidence" value="ECO:0000266"/>
    <property type="project" value="RGD"/>
</dbReference>
<dbReference type="GO" id="GO:0030507">
    <property type="term" value="F:spectrin binding"/>
    <property type="evidence" value="ECO:0000314"/>
    <property type="project" value="MGI"/>
</dbReference>
<dbReference type="GO" id="GO:0002031">
    <property type="term" value="P:G protein-coupled receptor internalization"/>
    <property type="evidence" value="ECO:0000318"/>
    <property type="project" value="GO_Central"/>
</dbReference>
<dbReference type="GO" id="GO:0007165">
    <property type="term" value="P:signal transduction"/>
    <property type="evidence" value="ECO:0007669"/>
    <property type="project" value="InterPro"/>
</dbReference>
<dbReference type="FunFam" id="2.60.40.840:FF:000002">
    <property type="entry name" value="Arrestin 3"/>
    <property type="match status" value="1"/>
</dbReference>
<dbReference type="FunFam" id="2.60.40.640:FF:000011">
    <property type="entry name" value="S-arrestin isoform X2"/>
    <property type="match status" value="1"/>
</dbReference>
<dbReference type="Gene3D" id="2.60.40.640">
    <property type="match status" value="1"/>
</dbReference>
<dbReference type="Gene3D" id="2.60.40.840">
    <property type="match status" value="1"/>
</dbReference>
<dbReference type="InterPro" id="IPR000698">
    <property type="entry name" value="Arrestin"/>
</dbReference>
<dbReference type="InterPro" id="IPR014752">
    <property type="entry name" value="Arrestin-like_C"/>
</dbReference>
<dbReference type="InterPro" id="IPR011021">
    <property type="entry name" value="Arrestin-like_N"/>
</dbReference>
<dbReference type="InterPro" id="IPR011022">
    <property type="entry name" value="Arrestin_C-like"/>
</dbReference>
<dbReference type="InterPro" id="IPR017864">
    <property type="entry name" value="Arrestin_CS"/>
</dbReference>
<dbReference type="InterPro" id="IPR014753">
    <property type="entry name" value="Arrestin_N"/>
</dbReference>
<dbReference type="InterPro" id="IPR014756">
    <property type="entry name" value="Ig_E-set"/>
</dbReference>
<dbReference type="PANTHER" id="PTHR11792">
    <property type="entry name" value="ARRESTIN"/>
    <property type="match status" value="1"/>
</dbReference>
<dbReference type="PANTHER" id="PTHR11792:SF15">
    <property type="entry name" value="S-ARRESTIN"/>
    <property type="match status" value="1"/>
</dbReference>
<dbReference type="Pfam" id="PF02752">
    <property type="entry name" value="Arrestin_C"/>
    <property type="match status" value="1"/>
</dbReference>
<dbReference type="Pfam" id="PF00339">
    <property type="entry name" value="Arrestin_N"/>
    <property type="match status" value="1"/>
</dbReference>
<dbReference type="PRINTS" id="PR00309">
    <property type="entry name" value="ARRESTIN"/>
</dbReference>
<dbReference type="SMART" id="SM01017">
    <property type="entry name" value="Arrestin_C"/>
    <property type="match status" value="1"/>
</dbReference>
<dbReference type="SUPFAM" id="SSF81296">
    <property type="entry name" value="E set domains"/>
    <property type="match status" value="2"/>
</dbReference>
<dbReference type="PROSITE" id="PS00295">
    <property type="entry name" value="ARRESTINS"/>
    <property type="match status" value="1"/>
</dbReference>
<protein>
    <recommendedName>
        <fullName>S-arrestin</fullName>
    </recommendedName>
    <alternativeName>
        <fullName>48 kDa protein</fullName>
    </alternativeName>
    <alternativeName>
        <fullName>Retinal S-antigen</fullName>
        <shortName>S-AG</shortName>
    </alternativeName>
    <alternativeName>
        <fullName>Rod photoreceptor arrestin</fullName>
    </alternativeName>
</protein>